<dbReference type="EC" id="1.6.5.2" evidence="1"/>
<dbReference type="EMBL" id="CP000822">
    <property type="protein sequence ID" value="ABV14418.1"/>
    <property type="molecule type" value="Genomic_DNA"/>
</dbReference>
<dbReference type="RefSeq" id="WP_012134121.1">
    <property type="nucleotide sequence ID" value="NC_009792.1"/>
</dbReference>
<dbReference type="SMR" id="A8ALQ5"/>
<dbReference type="STRING" id="290338.CKO_03335"/>
<dbReference type="GeneID" id="45137099"/>
<dbReference type="KEGG" id="cko:CKO_03335"/>
<dbReference type="HOGENOM" id="CLU_058643_0_2_6"/>
<dbReference type="OrthoDB" id="9798454at2"/>
<dbReference type="Proteomes" id="UP000008148">
    <property type="component" value="Chromosome"/>
</dbReference>
<dbReference type="GO" id="GO:0005886">
    <property type="term" value="C:plasma membrane"/>
    <property type="evidence" value="ECO:0007669"/>
    <property type="project" value="UniProtKB-SubCell"/>
</dbReference>
<dbReference type="GO" id="GO:0009055">
    <property type="term" value="F:electron transfer activity"/>
    <property type="evidence" value="ECO:0007669"/>
    <property type="project" value="TreeGrafter"/>
</dbReference>
<dbReference type="GO" id="GO:0010181">
    <property type="term" value="F:FMN binding"/>
    <property type="evidence" value="ECO:0007669"/>
    <property type="project" value="UniProtKB-UniRule"/>
</dbReference>
<dbReference type="GO" id="GO:0050136">
    <property type="term" value="F:NADH:ubiquinone reductase (non-electrogenic) activity"/>
    <property type="evidence" value="ECO:0007669"/>
    <property type="project" value="RHEA"/>
</dbReference>
<dbReference type="GO" id="GO:0008753">
    <property type="term" value="F:NADPH dehydrogenase (quinone) activity"/>
    <property type="evidence" value="ECO:0007669"/>
    <property type="project" value="RHEA"/>
</dbReference>
<dbReference type="GO" id="GO:1901381">
    <property type="term" value="P:positive regulation of potassium ion transmembrane transport"/>
    <property type="evidence" value="ECO:0007669"/>
    <property type="project" value="UniProtKB-UniRule"/>
</dbReference>
<dbReference type="GO" id="GO:0006813">
    <property type="term" value="P:potassium ion transport"/>
    <property type="evidence" value="ECO:0007669"/>
    <property type="project" value="InterPro"/>
</dbReference>
<dbReference type="Gene3D" id="3.40.50.360">
    <property type="match status" value="1"/>
</dbReference>
<dbReference type="HAMAP" id="MF_01414">
    <property type="entry name" value="K_H_efflux_KefF"/>
    <property type="match status" value="1"/>
</dbReference>
<dbReference type="InterPro" id="IPR003680">
    <property type="entry name" value="Flavodoxin_fold"/>
</dbReference>
<dbReference type="InterPro" id="IPR029039">
    <property type="entry name" value="Flavoprotein-like_sf"/>
</dbReference>
<dbReference type="InterPro" id="IPR023948">
    <property type="entry name" value="K_H_efflux_KefF"/>
</dbReference>
<dbReference type="InterPro" id="IPR046980">
    <property type="entry name" value="KefG/KefF"/>
</dbReference>
<dbReference type="NCBIfam" id="NF002044">
    <property type="entry name" value="PRK00871.1"/>
    <property type="match status" value="1"/>
</dbReference>
<dbReference type="PANTHER" id="PTHR47307:SF2">
    <property type="entry name" value="GLUTATHIONE-REGULATED POTASSIUM-EFFLUX SYSTEM ANCILLARY PROTEIN KEFF"/>
    <property type="match status" value="1"/>
</dbReference>
<dbReference type="PANTHER" id="PTHR47307">
    <property type="entry name" value="GLUTATHIONE-REGULATED POTASSIUM-EFFLUX SYSTEM ANCILLARY PROTEIN KEFG"/>
    <property type="match status" value="1"/>
</dbReference>
<dbReference type="Pfam" id="PF02525">
    <property type="entry name" value="Flavodoxin_2"/>
    <property type="match status" value="1"/>
</dbReference>
<dbReference type="SUPFAM" id="SSF52218">
    <property type="entry name" value="Flavoproteins"/>
    <property type="match status" value="1"/>
</dbReference>
<organism>
    <name type="scientific">Citrobacter koseri (strain ATCC BAA-895 / CDC 4225-83 / SGSC4696)</name>
    <dbReference type="NCBI Taxonomy" id="290338"/>
    <lineage>
        <taxon>Bacteria</taxon>
        <taxon>Pseudomonadati</taxon>
        <taxon>Pseudomonadota</taxon>
        <taxon>Gammaproteobacteria</taxon>
        <taxon>Enterobacterales</taxon>
        <taxon>Enterobacteriaceae</taxon>
        <taxon>Citrobacter</taxon>
    </lineage>
</organism>
<feature type="chain" id="PRO_1000068462" description="Glutathione-regulated potassium-efflux system ancillary protein KefF">
    <location>
        <begin position="1"/>
        <end position="176"/>
    </location>
</feature>
<feature type="binding site" evidence="1">
    <location>
        <position position="8"/>
    </location>
    <ligand>
        <name>FMN</name>
        <dbReference type="ChEBI" id="CHEBI:58210"/>
    </ligand>
</feature>
<feature type="binding site" evidence="1">
    <location>
        <begin position="14"/>
        <end position="17"/>
    </location>
    <ligand>
        <name>FMN</name>
        <dbReference type="ChEBI" id="CHEBI:58210"/>
    </ligand>
</feature>
<feature type="binding site" evidence="1">
    <location>
        <begin position="65"/>
        <end position="68"/>
    </location>
    <ligand>
        <name>FMN</name>
        <dbReference type="ChEBI" id="CHEBI:58210"/>
    </ligand>
</feature>
<feature type="binding site" evidence="1">
    <location>
        <begin position="105"/>
        <end position="108"/>
    </location>
    <ligand>
        <name>FMN</name>
        <dbReference type="ChEBI" id="CHEBI:58210"/>
    </ligand>
</feature>
<accession>A8ALQ5</accession>
<keyword id="KW-0997">Cell inner membrane</keyword>
<keyword id="KW-1003">Cell membrane</keyword>
<keyword id="KW-0285">Flavoprotein</keyword>
<keyword id="KW-0288">FMN</keyword>
<keyword id="KW-0472">Membrane</keyword>
<keyword id="KW-0520">NAD</keyword>
<keyword id="KW-0560">Oxidoreductase</keyword>
<keyword id="KW-1185">Reference proteome</keyword>
<name>KEFF_CITK8</name>
<sequence length="176" mass="20084">MILIIYAHPYPQHSHANKRMLEQARTLDGVEIRSLYQLYPDFNIDVAAEQQALARARLIIWQHPMQWYSVPPLLKLWMDKVLAHGWAYGHGGTALRDKDLMWAVTTGGGESHFAIGAYPGFDVLSQPLQATALYCGLNWLPPFAMHCTFVCDDETLQAQARHYKQRLLAWQEANHG</sequence>
<reference key="1">
    <citation type="submission" date="2007-08" db="EMBL/GenBank/DDBJ databases">
        <authorList>
            <consortium name="The Citrobacter koseri Genome Sequencing Project"/>
            <person name="McClelland M."/>
            <person name="Sanderson E.K."/>
            <person name="Porwollik S."/>
            <person name="Spieth J."/>
            <person name="Clifton W.S."/>
            <person name="Latreille P."/>
            <person name="Courtney L."/>
            <person name="Wang C."/>
            <person name="Pepin K."/>
            <person name="Bhonagiri V."/>
            <person name="Nash W."/>
            <person name="Johnson M."/>
            <person name="Thiruvilangam P."/>
            <person name="Wilson R."/>
        </authorList>
    </citation>
    <scope>NUCLEOTIDE SEQUENCE [LARGE SCALE GENOMIC DNA]</scope>
    <source>
        <strain>ATCC BAA-895 / CDC 4225-83 / SGSC4696</strain>
    </source>
</reference>
<gene>
    <name evidence="1" type="primary">kefF</name>
    <name type="ordered locus">CKO_03335</name>
</gene>
<comment type="function">
    <text evidence="1">Regulatory subunit of a potassium efflux system that confers protection against electrophiles. Required for full activity of KefC. Shows redox enzymatic activity, but this enzymatic activity is not required for activation of KefC.</text>
</comment>
<comment type="catalytic activity">
    <reaction evidence="1">
        <text>a quinone + NADH + H(+) = a quinol + NAD(+)</text>
        <dbReference type="Rhea" id="RHEA:46160"/>
        <dbReference type="ChEBI" id="CHEBI:15378"/>
        <dbReference type="ChEBI" id="CHEBI:24646"/>
        <dbReference type="ChEBI" id="CHEBI:57540"/>
        <dbReference type="ChEBI" id="CHEBI:57945"/>
        <dbReference type="ChEBI" id="CHEBI:132124"/>
        <dbReference type="EC" id="1.6.5.2"/>
    </reaction>
</comment>
<comment type="catalytic activity">
    <reaction evidence="1">
        <text>a quinone + NADPH + H(+) = a quinol + NADP(+)</text>
        <dbReference type="Rhea" id="RHEA:46164"/>
        <dbReference type="ChEBI" id="CHEBI:15378"/>
        <dbReference type="ChEBI" id="CHEBI:24646"/>
        <dbReference type="ChEBI" id="CHEBI:57783"/>
        <dbReference type="ChEBI" id="CHEBI:58349"/>
        <dbReference type="ChEBI" id="CHEBI:132124"/>
        <dbReference type="EC" id="1.6.5.2"/>
    </reaction>
</comment>
<comment type="cofactor">
    <cofactor evidence="1">
        <name>FMN</name>
        <dbReference type="ChEBI" id="CHEBI:58210"/>
    </cofactor>
</comment>
<comment type="subunit">
    <text evidence="1">Homodimer. Interacts with KefC.</text>
</comment>
<comment type="subcellular location">
    <subcellularLocation>
        <location evidence="1">Cell inner membrane</location>
        <topology evidence="1">Peripheral membrane protein</topology>
        <orientation evidence="1">Cytoplasmic side</orientation>
    </subcellularLocation>
</comment>
<comment type="similarity">
    <text evidence="1">Belongs to the NAD(P)H dehydrogenase (quinone) family. KefF subfamily.</text>
</comment>
<protein>
    <recommendedName>
        <fullName evidence="1">Glutathione-regulated potassium-efflux system ancillary protein KefF</fullName>
    </recommendedName>
    <alternativeName>
        <fullName evidence="1">Quinone oxidoreductase KefF</fullName>
        <ecNumber evidence="1">1.6.5.2</ecNumber>
    </alternativeName>
</protein>
<proteinExistence type="inferred from homology"/>
<evidence type="ECO:0000255" key="1">
    <source>
        <dbReference type="HAMAP-Rule" id="MF_01414"/>
    </source>
</evidence>